<sequence>MASTTRRNKVEKAPYQDAVTVILNKEGKTYESWSQEIVNSNCLSLLQGENPKWRNKMLEVAAMEIIADSVVKQEEKRQNQTHN</sequence>
<dbReference type="EMBL" id="AF188935">
    <property type="protein sequence ID" value="AAF13624.1"/>
    <property type="molecule type" value="Genomic_DNA"/>
</dbReference>
<dbReference type="EMBL" id="AE011191">
    <property type="protein sequence ID" value="AAM26179.1"/>
    <property type="molecule type" value="Genomic_DNA"/>
</dbReference>
<dbReference type="EMBL" id="AE017335">
    <property type="protein sequence ID" value="AAT28948.2"/>
    <property type="molecule type" value="Genomic_DNA"/>
</dbReference>
<dbReference type="RefSeq" id="NP_053174.1">
    <property type="nucleotide sequence ID" value="NC_002146.1"/>
</dbReference>
<dbReference type="RefSeq" id="WP_000168955.1">
    <property type="nucleotide sequence ID" value="NZ_VTZL01000009.1"/>
</dbReference>
<dbReference type="SMR" id="Q9RN13"/>
<dbReference type="GeneID" id="45025332"/>
<dbReference type="KEGG" id="banh:HYU01_29090"/>
<dbReference type="KEGG" id="bar:GBAA_pXO2_0018"/>
<dbReference type="HOGENOM" id="CLU_183521_0_0_9"/>
<dbReference type="OMA" id="EPEWRNK"/>
<dbReference type="Proteomes" id="UP000000594">
    <property type="component" value="Plasmid pXO2"/>
</dbReference>
<name>Y6518_BACAN</name>
<geneLocation type="plasmid">
    <name>pXO2</name>
</geneLocation>
<keyword id="KW-0614">Plasmid</keyword>
<keyword id="KW-1185">Reference proteome</keyword>
<proteinExistence type="predicted"/>
<accession>Q9RN13</accession>
<gene>
    <name type="ordered locus">pXO2-19</name>
    <name type="ordered locus">BXB0018</name>
    <name type="ordered locus">GBAA_pXO2_0018</name>
</gene>
<reference key="1">
    <citation type="journal article" date="1999" name="J. Appl. Microbiol.">
        <title>Sequence, assembly and analysis of pXO1 and pXO2.</title>
        <authorList>
            <person name="Okinaka R.T."/>
            <person name="Cloud K."/>
            <person name="Hampton O."/>
            <person name="Hoffmaster A."/>
            <person name="Hill K.K."/>
            <person name="Keim P."/>
            <person name="Koehler T."/>
            <person name="Lamke G."/>
            <person name="Kumano S."/>
            <person name="Manter D."/>
            <person name="Martinez Y."/>
            <person name="Ricke D."/>
            <person name="Svensson R."/>
            <person name="Jackson P.J."/>
        </authorList>
    </citation>
    <scope>NUCLEOTIDE SEQUENCE [GENOMIC DNA]</scope>
    <source>
        <strain>Pasteur</strain>
    </source>
</reference>
<reference key="2">
    <citation type="journal article" date="2002" name="Science">
        <title>Comparative genome sequencing for discovery of novel polymorphisms in Bacillus anthracis.</title>
        <authorList>
            <person name="Read T.D."/>
            <person name="Salzberg S.L."/>
            <person name="Pop M."/>
            <person name="Shumway M.F."/>
            <person name="Umayam L."/>
            <person name="Jiang L."/>
            <person name="Holtzapple E."/>
            <person name="Busch J.D."/>
            <person name="Smith K.L."/>
            <person name="Schupp J.M."/>
            <person name="Solomon D."/>
            <person name="Keim P."/>
            <person name="Fraser C.M."/>
        </authorList>
    </citation>
    <scope>NUCLEOTIDE SEQUENCE [GENOMIC DNA]</scope>
    <source>
        <strain>Ames / isolate Florida / A2012</strain>
    </source>
</reference>
<reference key="3">
    <citation type="journal article" date="2009" name="J. Bacteriol.">
        <title>The complete genome sequence of Bacillus anthracis Ames 'Ancestor'.</title>
        <authorList>
            <person name="Ravel J."/>
            <person name="Jiang L."/>
            <person name="Stanley S.T."/>
            <person name="Wilson M.R."/>
            <person name="Decker R.S."/>
            <person name="Read T.D."/>
            <person name="Worsham P."/>
            <person name="Keim P.S."/>
            <person name="Salzberg S.L."/>
            <person name="Fraser-Liggett C.M."/>
            <person name="Rasko D.A."/>
        </authorList>
    </citation>
    <scope>NUCLEOTIDE SEQUENCE [LARGE SCALE GENOMIC DNA]</scope>
    <source>
        <strain>Ames ancestor</strain>
    </source>
</reference>
<feature type="chain" id="PRO_0000216838" description="Uncharacterized protein pXO2-19/BXB0018/GBAA_pXO2_0018">
    <location>
        <begin position="1"/>
        <end position="83"/>
    </location>
</feature>
<organism>
    <name type="scientific">Bacillus anthracis</name>
    <dbReference type="NCBI Taxonomy" id="1392"/>
    <lineage>
        <taxon>Bacteria</taxon>
        <taxon>Bacillati</taxon>
        <taxon>Bacillota</taxon>
        <taxon>Bacilli</taxon>
        <taxon>Bacillales</taxon>
        <taxon>Bacillaceae</taxon>
        <taxon>Bacillus</taxon>
        <taxon>Bacillus cereus group</taxon>
    </lineage>
</organism>
<protein>
    <recommendedName>
        <fullName>Uncharacterized protein pXO2-19/BXB0018/GBAA_pXO2_0018</fullName>
    </recommendedName>
</protein>